<sequence length="197" mass="21413">MDMQHRIRQLFQASIETKQQALEVLPPYIEQASLVMVNALLNEGKILSCGNGGSAGDAQHFSSELLNRFERERPSLPAVALTTDSSTITSIANDYSYNEVFSKQIRALGQPGDVLLAISTSGNSANVIQAIQAAHDREMLVVALTGRDGGGMASLLLPEDVEIRVPSKITARIQEVHLLAIHCLCDLIDRQLFGSEE</sequence>
<reference key="1">
    <citation type="journal article" date="2009" name="Genome Res.">
        <title>Newly introduced genomic prophage islands are critical determinants of in vivo competitiveness in the Liverpool epidemic strain of Pseudomonas aeruginosa.</title>
        <authorList>
            <person name="Winstanley C."/>
            <person name="Langille M.G.I."/>
            <person name="Fothergill J.L."/>
            <person name="Kukavica-Ibrulj I."/>
            <person name="Paradis-Bleau C."/>
            <person name="Sanschagrin F."/>
            <person name="Thomson N.R."/>
            <person name="Winsor G.L."/>
            <person name="Quail M.A."/>
            <person name="Lennard N."/>
            <person name="Bignell A."/>
            <person name="Clarke L."/>
            <person name="Seeger K."/>
            <person name="Saunders D."/>
            <person name="Harris D."/>
            <person name="Parkhill J."/>
            <person name="Hancock R.E.W."/>
            <person name="Brinkman F.S.L."/>
            <person name="Levesque R.C."/>
        </authorList>
    </citation>
    <scope>NUCLEOTIDE SEQUENCE [LARGE SCALE GENOMIC DNA]</scope>
    <source>
        <strain>LESB58</strain>
    </source>
</reference>
<dbReference type="EC" id="5.3.1.28" evidence="1"/>
<dbReference type="EMBL" id="FM209186">
    <property type="protein sequence ID" value="CAW29558.1"/>
    <property type="molecule type" value="Genomic_DNA"/>
</dbReference>
<dbReference type="RefSeq" id="WP_003094149.1">
    <property type="nucleotide sequence ID" value="NC_011770.1"/>
</dbReference>
<dbReference type="SMR" id="B7UZK3"/>
<dbReference type="KEGG" id="pag:PLES_48041"/>
<dbReference type="HOGENOM" id="CLU_080999_3_1_6"/>
<dbReference type="UniPathway" id="UPA00041">
    <property type="reaction ID" value="UER00436"/>
</dbReference>
<dbReference type="GO" id="GO:0005737">
    <property type="term" value="C:cytoplasm"/>
    <property type="evidence" value="ECO:0007669"/>
    <property type="project" value="UniProtKB-SubCell"/>
</dbReference>
<dbReference type="GO" id="GO:0097367">
    <property type="term" value="F:carbohydrate derivative binding"/>
    <property type="evidence" value="ECO:0007669"/>
    <property type="project" value="InterPro"/>
</dbReference>
<dbReference type="GO" id="GO:0008968">
    <property type="term" value="F:D-sedoheptulose 7-phosphate isomerase activity"/>
    <property type="evidence" value="ECO:0007669"/>
    <property type="project" value="UniProtKB-UniRule"/>
</dbReference>
<dbReference type="GO" id="GO:0008270">
    <property type="term" value="F:zinc ion binding"/>
    <property type="evidence" value="ECO:0007669"/>
    <property type="project" value="UniProtKB-UniRule"/>
</dbReference>
<dbReference type="GO" id="GO:0005975">
    <property type="term" value="P:carbohydrate metabolic process"/>
    <property type="evidence" value="ECO:0007669"/>
    <property type="project" value="UniProtKB-UniRule"/>
</dbReference>
<dbReference type="GO" id="GO:2001061">
    <property type="term" value="P:D-glycero-D-manno-heptose 7-phosphate biosynthetic process"/>
    <property type="evidence" value="ECO:0007669"/>
    <property type="project" value="UniProtKB-UniPathway"/>
</dbReference>
<dbReference type="CDD" id="cd05006">
    <property type="entry name" value="SIS_GmhA"/>
    <property type="match status" value="1"/>
</dbReference>
<dbReference type="Gene3D" id="3.40.50.10490">
    <property type="entry name" value="Glucose-6-phosphate isomerase like protein, domain 1"/>
    <property type="match status" value="1"/>
</dbReference>
<dbReference type="HAMAP" id="MF_00067">
    <property type="entry name" value="GmhA"/>
    <property type="match status" value="1"/>
</dbReference>
<dbReference type="InterPro" id="IPR035461">
    <property type="entry name" value="GmhA/DiaA"/>
</dbReference>
<dbReference type="InterPro" id="IPR004515">
    <property type="entry name" value="Phosphoheptose_Isoase"/>
</dbReference>
<dbReference type="InterPro" id="IPR001347">
    <property type="entry name" value="SIS_dom"/>
</dbReference>
<dbReference type="InterPro" id="IPR046348">
    <property type="entry name" value="SIS_dom_sf"/>
</dbReference>
<dbReference type="InterPro" id="IPR050099">
    <property type="entry name" value="SIS_GmhA/DiaA_subfam"/>
</dbReference>
<dbReference type="NCBIfam" id="NF010546">
    <property type="entry name" value="PRK13936.1"/>
    <property type="match status" value="1"/>
</dbReference>
<dbReference type="PANTHER" id="PTHR30390:SF6">
    <property type="entry name" value="DNAA INITIATOR-ASSOCIATING PROTEIN DIAA"/>
    <property type="match status" value="1"/>
</dbReference>
<dbReference type="PANTHER" id="PTHR30390">
    <property type="entry name" value="SEDOHEPTULOSE 7-PHOSPHATE ISOMERASE / DNAA INITIATOR-ASSOCIATING FACTOR FOR REPLICATION INITIATION"/>
    <property type="match status" value="1"/>
</dbReference>
<dbReference type="Pfam" id="PF13580">
    <property type="entry name" value="SIS_2"/>
    <property type="match status" value="1"/>
</dbReference>
<dbReference type="SUPFAM" id="SSF53697">
    <property type="entry name" value="SIS domain"/>
    <property type="match status" value="1"/>
</dbReference>
<dbReference type="PROSITE" id="PS51464">
    <property type="entry name" value="SIS"/>
    <property type="match status" value="1"/>
</dbReference>
<name>GMHA_PSEA8</name>
<accession>B7UZK3</accession>
<keyword id="KW-0119">Carbohydrate metabolism</keyword>
<keyword id="KW-0963">Cytoplasm</keyword>
<keyword id="KW-0413">Isomerase</keyword>
<keyword id="KW-0479">Metal-binding</keyword>
<keyword id="KW-0862">Zinc</keyword>
<evidence type="ECO:0000255" key="1">
    <source>
        <dbReference type="HAMAP-Rule" id="MF_00067"/>
    </source>
</evidence>
<protein>
    <recommendedName>
        <fullName evidence="1">Phosphoheptose isomerase</fullName>
        <ecNumber evidence="1">5.3.1.28</ecNumber>
    </recommendedName>
    <alternativeName>
        <fullName evidence="1">Sedoheptulose 7-phosphate isomerase</fullName>
    </alternativeName>
</protein>
<feature type="chain" id="PRO_1000197011" description="Phosphoheptose isomerase">
    <location>
        <begin position="1"/>
        <end position="197"/>
    </location>
</feature>
<feature type="domain" description="SIS" evidence="1">
    <location>
        <begin position="36"/>
        <end position="197"/>
    </location>
</feature>
<feature type="binding site" evidence="1">
    <location>
        <begin position="51"/>
        <end position="53"/>
    </location>
    <ligand>
        <name>substrate</name>
    </ligand>
</feature>
<feature type="binding site" evidence="1">
    <location>
        <position position="60"/>
    </location>
    <ligand>
        <name>Zn(2+)</name>
        <dbReference type="ChEBI" id="CHEBI:29105"/>
    </ligand>
</feature>
<feature type="binding site" evidence="1">
    <location>
        <position position="64"/>
    </location>
    <ligand>
        <name>substrate</name>
    </ligand>
</feature>
<feature type="binding site" evidence="1">
    <location>
        <position position="64"/>
    </location>
    <ligand>
        <name>Zn(2+)</name>
        <dbReference type="ChEBI" id="CHEBI:29105"/>
    </ligand>
</feature>
<feature type="binding site" evidence="1">
    <location>
        <begin position="93"/>
        <end position="94"/>
    </location>
    <ligand>
        <name>substrate</name>
    </ligand>
</feature>
<feature type="binding site" evidence="1">
    <location>
        <begin position="119"/>
        <end position="121"/>
    </location>
    <ligand>
        <name>substrate</name>
    </ligand>
</feature>
<feature type="binding site" evidence="1">
    <location>
        <position position="124"/>
    </location>
    <ligand>
        <name>substrate</name>
    </ligand>
</feature>
<feature type="binding site" evidence="1">
    <location>
        <position position="174"/>
    </location>
    <ligand>
        <name>substrate</name>
    </ligand>
</feature>
<feature type="binding site" evidence="1">
    <location>
        <position position="174"/>
    </location>
    <ligand>
        <name>Zn(2+)</name>
        <dbReference type="ChEBI" id="CHEBI:29105"/>
    </ligand>
</feature>
<feature type="binding site" evidence="1">
    <location>
        <position position="182"/>
    </location>
    <ligand>
        <name>Zn(2+)</name>
        <dbReference type="ChEBI" id="CHEBI:29105"/>
    </ligand>
</feature>
<gene>
    <name evidence="1" type="primary">gmhA</name>
    <name type="ordered locus">PLES_48041</name>
</gene>
<organism>
    <name type="scientific">Pseudomonas aeruginosa (strain LESB58)</name>
    <dbReference type="NCBI Taxonomy" id="557722"/>
    <lineage>
        <taxon>Bacteria</taxon>
        <taxon>Pseudomonadati</taxon>
        <taxon>Pseudomonadota</taxon>
        <taxon>Gammaproteobacteria</taxon>
        <taxon>Pseudomonadales</taxon>
        <taxon>Pseudomonadaceae</taxon>
        <taxon>Pseudomonas</taxon>
    </lineage>
</organism>
<comment type="function">
    <text evidence="1">Catalyzes the isomerization of sedoheptulose 7-phosphate in D-glycero-D-manno-heptose 7-phosphate.</text>
</comment>
<comment type="catalytic activity">
    <reaction evidence="1">
        <text>2 D-sedoheptulose 7-phosphate = D-glycero-alpha-D-manno-heptose 7-phosphate + D-glycero-beta-D-manno-heptose 7-phosphate</text>
        <dbReference type="Rhea" id="RHEA:27489"/>
        <dbReference type="ChEBI" id="CHEBI:57483"/>
        <dbReference type="ChEBI" id="CHEBI:60203"/>
        <dbReference type="ChEBI" id="CHEBI:60204"/>
        <dbReference type="EC" id="5.3.1.28"/>
    </reaction>
</comment>
<comment type="cofactor">
    <cofactor evidence="1">
        <name>Zn(2+)</name>
        <dbReference type="ChEBI" id="CHEBI:29105"/>
    </cofactor>
    <text evidence="1">Binds 1 zinc ion per subunit.</text>
</comment>
<comment type="pathway">
    <text evidence="1">Carbohydrate biosynthesis; D-glycero-D-manno-heptose 7-phosphate biosynthesis; D-glycero-alpha-D-manno-heptose 7-phosphate and D-glycero-beta-D-manno-heptose 7-phosphate from sedoheptulose 7-phosphate: step 1/1.</text>
</comment>
<comment type="subunit">
    <text evidence="1">Homotetramer.</text>
</comment>
<comment type="subcellular location">
    <subcellularLocation>
        <location evidence="1">Cytoplasm</location>
    </subcellularLocation>
</comment>
<comment type="miscellaneous">
    <text evidence="1">The reaction produces a racemic mixture of D-glycero-alpha-D-manno-heptose 7-phosphate and D-glycero-beta-D-manno-heptose 7-phosphate.</text>
</comment>
<comment type="similarity">
    <text evidence="1">Belongs to the SIS family. GmhA subfamily.</text>
</comment>
<proteinExistence type="inferred from homology"/>